<reference key="1">
    <citation type="journal article" date="2016" name="Front. Microbiol.">
        <title>The complete genome sequence of hyperthermophile Dictyoglomus turgidum DSM 6724 reveals a specialized carbohydrate fermentor.</title>
        <authorList>
            <person name="Brumm P.J."/>
            <person name="Gowda K."/>
            <person name="Robb F.T."/>
            <person name="Mead D.A."/>
        </authorList>
    </citation>
    <scope>NUCLEOTIDE SEQUENCE [LARGE SCALE GENOMIC DNA]</scope>
    <source>
        <strain>DSM 6724 / Z-1310</strain>
    </source>
</reference>
<name>COAD_DICTD</name>
<sequence length="160" mass="18295">MIKAVYPGSFDPVTNGHIDIIQRGAKIYDEVIVLVAENISKTPLFSLEERLDMLRHSLKDIPNVKIDHFSGLLVDYLKKIDVKIIIRGLRAVSDFEYEFQQALTNKKLYPECETVFLVSDLKYTFLSSSMVKEIAKFGGCIKGLVPDYVAEKLYEKFKVK</sequence>
<accession>B8E2S1</accession>
<protein>
    <recommendedName>
        <fullName evidence="1">Phosphopantetheine adenylyltransferase</fullName>
        <ecNumber evidence="1">2.7.7.3</ecNumber>
    </recommendedName>
    <alternativeName>
        <fullName evidence="1">Dephospho-CoA pyrophosphorylase</fullName>
    </alternativeName>
    <alternativeName>
        <fullName evidence="1">Pantetheine-phosphate adenylyltransferase</fullName>
        <shortName evidence="1">PPAT</shortName>
    </alternativeName>
</protein>
<keyword id="KW-0067">ATP-binding</keyword>
<keyword id="KW-0173">Coenzyme A biosynthesis</keyword>
<keyword id="KW-0963">Cytoplasm</keyword>
<keyword id="KW-0460">Magnesium</keyword>
<keyword id="KW-0547">Nucleotide-binding</keyword>
<keyword id="KW-0548">Nucleotidyltransferase</keyword>
<keyword id="KW-1185">Reference proteome</keyword>
<keyword id="KW-0808">Transferase</keyword>
<evidence type="ECO:0000255" key="1">
    <source>
        <dbReference type="HAMAP-Rule" id="MF_00151"/>
    </source>
</evidence>
<organism>
    <name type="scientific">Dictyoglomus turgidum (strain DSM 6724 / Z-1310)</name>
    <dbReference type="NCBI Taxonomy" id="515635"/>
    <lineage>
        <taxon>Bacteria</taxon>
        <taxon>Pseudomonadati</taxon>
        <taxon>Dictyoglomota</taxon>
        <taxon>Dictyoglomia</taxon>
        <taxon>Dictyoglomales</taxon>
        <taxon>Dictyoglomaceae</taxon>
        <taxon>Dictyoglomus</taxon>
    </lineage>
</organism>
<proteinExistence type="inferred from homology"/>
<dbReference type="EC" id="2.7.7.3" evidence="1"/>
<dbReference type="EMBL" id="CP001251">
    <property type="protein sequence ID" value="ACK42421.1"/>
    <property type="molecule type" value="Genomic_DNA"/>
</dbReference>
<dbReference type="RefSeq" id="WP_012583503.1">
    <property type="nucleotide sequence ID" value="NC_011661.1"/>
</dbReference>
<dbReference type="RefSeq" id="YP_002353035.1">
    <property type="nucleotide sequence ID" value="NC_011661.1"/>
</dbReference>
<dbReference type="SMR" id="B8E2S1"/>
<dbReference type="FunCoup" id="B8E2S1">
    <property type="interactions" value="366"/>
</dbReference>
<dbReference type="STRING" id="515635.Dtur_1142"/>
<dbReference type="EnsemblBacteria" id="ACK42421">
    <property type="protein sequence ID" value="ACK42421"/>
    <property type="gene ID" value="Dtur_1142"/>
</dbReference>
<dbReference type="KEGG" id="dtu:Dtur_1142"/>
<dbReference type="PATRIC" id="fig|515635.4.peg.1179"/>
<dbReference type="eggNOG" id="COG0669">
    <property type="taxonomic scope" value="Bacteria"/>
</dbReference>
<dbReference type="HOGENOM" id="CLU_100149_0_1_0"/>
<dbReference type="InParanoid" id="B8E2S1"/>
<dbReference type="OrthoDB" id="9806661at2"/>
<dbReference type="UniPathway" id="UPA00241">
    <property type="reaction ID" value="UER00355"/>
</dbReference>
<dbReference type="Proteomes" id="UP000007719">
    <property type="component" value="Chromosome"/>
</dbReference>
<dbReference type="GO" id="GO:0005737">
    <property type="term" value="C:cytoplasm"/>
    <property type="evidence" value="ECO:0007669"/>
    <property type="project" value="UniProtKB-SubCell"/>
</dbReference>
<dbReference type="GO" id="GO:0005524">
    <property type="term" value="F:ATP binding"/>
    <property type="evidence" value="ECO:0007669"/>
    <property type="project" value="UniProtKB-KW"/>
</dbReference>
<dbReference type="GO" id="GO:0004595">
    <property type="term" value="F:pantetheine-phosphate adenylyltransferase activity"/>
    <property type="evidence" value="ECO:0000318"/>
    <property type="project" value="GO_Central"/>
</dbReference>
<dbReference type="GO" id="GO:0015937">
    <property type="term" value="P:coenzyme A biosynthetic process"/>
    <property type="evidence" value="ECO:0000318"/>
    <property type="project" value="GO_Central"/>
</dbReference>
<dbReference type="CDD" id="cd02163">
    <property type="entry name" value="PPAT"/>
    <property type="match status" value="1"/>
</dbReference>
<dbReference type="Gene3D" id="3.40.50.620">
    <property type="entry name" value="HUPs"/>
    <property type="match status" value="1"/>
</dbReference>
<dbReference type="HAMAP" id="MF_00151">
    <property type="entry name" value="PPAT_bact"/>
    <property type="match status" value="1"/>
</dbReference>
<dbReference type="InterPro" id="IPR004821">
    <property type="entry name" value="Cyt_trans-like"/>
</dbReference>
<dbReference type="InterPro" id="IPR001980">
    <property type="entry name" value="PPAT"/>
</dbReference>
<dbReference type="InterPro" id="IPR014729">
    <property type="entry name" value="Rossmann-like_a/b/a_fold"/>
</dbReference>
<dbReference type="NCBIfam" id="TIGR01510">
    <property type="entry name" value="coaD_prev_kdtB"/>
    <property type="match status" value="1"/>
</dbReference>
<dbReference type="NCBIfam" id="TIGR00125">
    <property type="entry name" value="cyt_tran_rel"/>
    <property type="match status" value="1"/>
</dbReference>
<dbReference type="PANTHER" id="PTHR21342">
    <property type="entry name" value="PHOSPHOPANTETHEINE ADENYLYLTRANSFERASE"/>
    <property type="match status" value="1"/>
</dbReference>
<dbReference type="PANTHER" id="PTHR21342:SF1">
    <property type="entry name" value="PHOSPHOPANTETHEINE ADENYLYLTRANSFERASE"/>
    <property type="match status" value="1"/>
</dbReference>
<dbReference type="Pfam" id="PF01467">
    <property type="entry name" value="CTP_transf_like"/>
    <property type="match status" value="1"/>
</dbReference>
<dbReference type="PRINTS" id="PR01020">
    <property type="entry name" value="LPSBIOSNTHSS"/>
</dbReference>
<dbReference type="SUPFAM" id="SSF52374">
    <property type="entry name" value="Nucleotidylyl transferase"/>
    <property type="match status" value="1"/>
</dbReference>
<comment type="function">
    <text evidence="1">Reversibly transfers an adenylyl group from ATP to 4'-phosphopantetheine, yielding dephospho-CoA (dPCoA) and pyrophosphate.</text>
</comment>
<comment type="catalytic activity">
    <reaction evidence="1">
        <text>(R)-4'-phosphopantetheine + ATP + H(+) = 3'-dephospho-CoA + diphosphate</text>
        <dbReference type="Rhea" id="RHEA:19801"/>
        <dbReference type="ChEBI" id="CHEBI:15378"/>
        <dbReference type="ChEBI" id="CHEBI:30616"/>
        <dbReference type="ChEBI" id="CHEBI:33019"/>
        <dbReference type="ChEBI" id="CHEBI:57328"/>
        <dbReference type="ChEBI" id="CHEBI:61723"/>
        <dbReference type="EC" id="2.7.7.3"/>
    </reaction>
</comment>
<comment type="cofactor">
    <cofactor evidence="1">
        <name>Mg(2+)</name>
        <dbReference type="ChEBI" id="CHEBI:18420"/>
    </cofactor>
</comment>
<comment type="pathway">
    <text evidence="1">Cofactor biosynthesis; coenzyme A biosynthesis; CoA from (R)-pantothenate: step 4/5.</text>
</comment>
<comment type="subunit">
    <text evidence="1">Homohexamer.</text>
</comment>
<comment type="subcellular location">
    <subcellularLocation>
        <location evidence="1">Cytoplasm</location>
    </subcellularLocation>
</comment>
<comment type="similarity">
    <text evidence="1">Belongs to the bacterial CoaD family.</text>
</comment>
<gene>
    <name evidence="1" type="primary">coaD</name>
    <name type="ordered locus">Dtur_1142</name>
</gene>
<feature type="chain" id="PRO_1000118075" description="Phosphopantetheine adenylyltransferase">
    <location>
        <begin position="1"/>
        <end position="160"/>
    </location>
</feature>
<feature type="binding site" evidence="1">
    <location>
        <begin position="9"/>
        <end position="10"/>
    </location>
    <ligand>
        <name>ATP</name>
        <dbReference type="ChEBI" id="CHEBI:30616"/>
    </ligand>
</feature>
<feature type="binding site" evidence="1">
    <location>
        <position position="9"/>
    </location>
    <ligand>
        <name>substrate</name>
    </ligand>
</feature>
<feature type="binding site" evidence="1">
    <location>
        <position position="17"/>
    </location>
    <ligand>
        <name>ATP</name>
        <dbReference type="ChEBI" id="CHEBI:30616"/>
    </ligand>
</feature>
<feature type="binding site" evidence="1">
    <location>
        <position position="41"/>
    </location>
    <ligand>
        <name>substrate</name>
    </ligand>
</feature>
<feature type="binding site" evidence="1">
    <location>
        <position position="73"/>
    </location>
    <ligand>
        <name>substrate</name>
    </ligand>
</feature>
<feature type="binding site" evidence="1">
    <location>
        <position position="87"/>
    </location>
    <ligand>
        <name>substrate</name>
    </ligand>
</feature>
<feature type="binding site" evidence="1">
    <location>
        <begin position="88"/>
        <end position="90"/>
    </location>
    <ligand>
        <name>ATP</name>
        <dbReference type="ChEBI" id="CHEBI:30616"/>
    </ligand>
</feature>
<feature type="binding site" evidence="1">
    <location>
        <position position="98"/>
    </location>
    <ligand>
        <name>ATP</name>
        <dbReference type="ChEBI" id="CHEBI:30616"/>
    </ligand>
</feature>
<feature type="binding site" evidence="1">
    <location>
        <begin position="123"/>
        <end position="129"/>
    </location>
    <ligand>
        <name>ATP</name>
        <dbReference type="ChEBI" id="CHEBI:30616"/>
    </ligand>
</feature>
<feature type="site" description="Transition state stabilizer" evidence="1">
    <location>
        <position position="17"/>
    </location>
</feature>